<reference key="1">
    <citation type="journal article" date="2008" name="DNA Res.">
        <title>Complete genome sequence and comparative analysis of the wild-type commensal Escherichia coli strain SE11 isolated from a healthy adult.</title>
        <authorList>
            <person name="Oshima K."/>
            <person name="Toh H."/>
            <person name="Ogura Y."/>
            <person name="Sasamoto H."/>
            <person name="Morita H."/>
            <person name="Park S.-H."/>
            <person name="Ooka T."/>
            <person name="Iyoda S."/>
            <person name="Taylor T.D."/>
            <person name="Hayashi T."/>
            <person name="Itoh K."/>
            <person name="Hattori M."/>
        </authorList>
    </citation>
    <scope>NUCLEOTIDE SEQUENCE [LARGE SCALE GENOMIC DNA]</scope>
    <source>
        <strain>SE11</strain>
    </source>
</reference>
<proteinExistence type="inferred from homology"/>
<evidence type="ECO:0000255" key="1">
    <source>
        <dbReference type="HAMAP-Rule" id="MF_00173"/>
    </source>
</evidence>
<protein>
    <recommendedName>
        <fullName evidence="1">Arginine repressor</fullName>
    </recommendedName>
</protein>
<keyword id="KW-0028">Amino-acid biosynthesis</keyword>
<keyword id="KW-0055">Arginine biosynthesis</keyword>
<keyword id="KW-0963">Cytoplasm</keyword>
<keyword id="KW-0238">DNA-binding</keyword>
<keyword id="KW-0678">Repressor</keyword>
<keyword id="KW-0804">Transcription</keyword>
<keyword id="KW-0805">Transcription regulation</keyword>
<comment type="function">
    <text evidence="1">Regulates arginine biosynthesis genes.</text>
</comment>
<comment type="pathway">
    <text>Amino-acid biosynthesis; L-arginine biosynthesis [regulation].</text>
</comment>
<comment type="subcellular location">
    <subcellularLocation>
        <location evidence="1">Cytoplasm</location>
    </subcellularLocation>
</comment>
<comment type="similarity">
    <text evidence="1">Belongs to the ArgR family.</text>
</comment>
<organism>
    <name type="scientific">Escherichia coli (strain SE11)</name>
    <dbReference type="NCBI Taxonomy" id="409438"/>
    <lineage>
        <taxon>Bacteria</taxon>
        <taxon>Pseudomonadati</taxon>
        <taxon>Pseudomonadota</taxon>
        <taxon>Gammaproteobacteria</taxon>
        <taxon>Enterobacterales</taxon>
        <taxon>Enterobacteriaceae</taxon>
        <taxon>Escherichia</taxon>
    </lineage>
</organism>
<gene>
    <name evidence="1" type="primary">argR</name>
    <name type="ordered locus">ECSE_3516</name>
</gene>
<sequence>MRSSAKQEELVKAFKALLKEEKFSSQGEIVAALQEQGFDNINQSKVSRMLTKFGAVRTRNAKMEMVYCLPAELGVPTTSSPLKNLVLDIDYNDAVVVIHTSPGAAQLIARLLDSLGKAEGILGTIAGDDTIFTTPANGFTVKDLYEAILELFDQEL</sequence>
<accession>B6I1V5</accession>
<dbReference type="EMBL" id="AP009240">
    <property type="protein sequence ID" value="BAG79040.1"/>
    <property type="molecule type" value="Genomic_DNA"/>
</dbReference>
<dbReference type="RefSeq" id="WP_001257846.1">
    <property type="nucleotide sequence ID" value="NC_011415.1"/>
</dbReference>
<dbReference type="SMR" id="B6I1V5"/>
<dbReference type="GeneID" id="93778748"/>
<dbReference type="KEGG" id="ecy:ECSE_3516"/>
<dbReference type="HOGENOM" id="CLU_097103_2_0_6"/>
<dbReference type="UniPathway" id="UPA00068"/>
<dbReference type="Proteomes" id="UP000008199">
    <property type="component" value="Chromosome"/>
</dbReference>
<dbReference type="GO" id="GO:0005737">
    <property type="term" value="C:cytoplasm"/>
    <property type="evidence" value="ECO:0007669"/>
    <property type="project" value="UniProtKB-SubCell"/>
</dbReference>
<dbReference type="GO" id="GO:0034618">
    <property type="term" value="F:arginine binding"/>
    <property type="evidence" value="ECO:0007669"/>
    <property type="project" value="InterPro"/>
</dbReference>
<dbReference type="GO" id="GO:0003677">
    <property type="term" value="F:DNA binding"/>
    <property type="evidence" value="ECO:0007669"/>
    <property type="project" value="UniProtKB-KW"/>
</dbReference>
<dbReference type="GO" id="GO:0003700">
    <property type="term" value="F:DNA-binding transcription factor activity"/>
    <property type="evidence" value="ECO:0007669"/>
    <property type="project" value="UniProtKB-UniRule"/>
</dbReference>
<dbReference type="GO" id="GO:0006526">
    <property type="term" value="P:L-arginine biosynthetic process"/>
    <property type="evidence" value="ECO:0007669"/>
    <property type="project" value="UniProtKB-UniPathway"/>
</dbReference>
<dbReference type="GO" id="GO:0051259">
    <property type="term" value="P:protein complex oligomerization"/>
    <property type="evidence" value="ECO:0007669"/>
    <property type="project" value="InterPro"/>
</dbReference>
<dbReference type="GO" id="GO:1900079">
    <property type="term" value="P:regulation of arginine biosynthetic process"/>
    <property type="evidence" value="ECO:0007669"/>
    <property type="project" value="UniProtKB-UniRule"/>
</dbReference>
<dbReference type="FunFam" id="1.10.10.10:FF:000074">
    <property type="entry name" value="Arginine repressor"/>
    <property type="match status" value="1"/>
</dbReference>
<dbReference type="FunFam" id="3.30.1360.40:FF:000004">
    <property type="entry name" value="Arginine repressor"/>
    <property type="match status" value="1"/>
</dbReference>
<dbReference type="Gene3D" id="3.30.1360.40">
    <property type="match status" value="1"/>
</dbReference>
<dbReference type="Gene3D" id="1.10.10.10">
    <property type="entry name" value="Winged helix-like DNA-binding domain superfamily/Winged helix DNA-binding domain"/>
    <property type="match status" value="1"/>
</dbReference>
<dbReference type="HAMAP" id="MF_00173">
    <property type="entry name" value="Arg_repressor"/>
    <property type="match status" value="1"/>
</dbReference>
<dbReference type="InterPro" id="IPR001669">
    <property type="entry name" value="Arg_repress"/>
</dbReference>
<dbReference type="InterPro" id="IPR020899">
    <property type="entry name" value="Arg_repress_C"/>
</dbReference>
<dbReference type="InterPro" id="IPR036251">
    <property type="entry name" value="Arg_repress_C_sf"/>
</dbReference>
<dbReference type="InterPro" id="IPR020900">
    <property type="entry name" value="Arg_repress_DNA-bd"/>
</dbReference>
<dbReference type="InterPro" id="IPR036388">
    <property type="entry name" value="WH-like_DNA-bd_sf"/>
</dbReference>
<dbReference type="InterPro" id="IPR036390">
    <property type="entry name" value="WH_DNA-bd_sf"/>
</dbReference>
<dbReference type="NCBIfam" id="TIGR01529">
    <property type="entry name" value="argR_whole"/>
    <property type="match status" value="1"/>
</dbReference>
<dbReference type="NCBIfam" id="NF003457">
    <property type="entry name" value="PRK05066.1"/>
    <property type="match status" value="1"/>
</dbReference>
<dbReference type="PANTHER" id="PTHR34471">
    <property type="entry name" value="ARGININE REPRESSOR"/>
    <property type="match status" value="1"/>
</dbReference>
<dbReference type="PANTHER" id="PTHR34471:SF1">
    <property type="entry name" value="ARGININE REPRESSOR"/>
    <property type="match status" value="1"/>
</dbReference>
<dbReference type="Pfam" id="PF01316">
    <property type="entry name" value="Arg_repressor"/>
    <property type="match status" value="1"/>
</dbReference>
<dbReference type="Pfam" id="PF02863">
    <property type="entry name" value="Arg_repressor_C"/>
    <property type="match status" value="1"/>
</dbReference>
<dbReference type="PRINTS" id="PR01467">
    <property type="entry name" value="ARGREPRESSOR"/>
</dbReference>
<dbReference type="SUPFAM" id="SSF55252">
    <property type="entry name" value="C-terminal domain of arginine repressor"/>
    <property type="match status" value="1"/>
</dbReference>
<dbReference type="SUPFAM" id="SSF46785">
    <property type="entry name" value="Winged helix' DNA-binding domain"/>
    <property type="match status" value="1"/>
</dbReference>
<feature type="chain" id="PRO_1000097870" description="Arginine repressor">
    <location>
        <begin position="1"/>
        <end position="156"/>
    </location>
</feature>
<name>ARGR_ECOSE</name>